<keyword id="KW-1003">Cell membrane</keyword>
<keyword id="KW-0133">Cell shape</keyword>
<keyword id="KW-0963">Cytoplasm</keyword>
<keyword id="KW-0206">Cytoskeleton</keyword>
<keyword id="KW-0449">Lipoprotein</keyword>
<keyword id="KW-0472">Membrane</keyword>
<keyword id="KW-0564">Palmitate</keyword>
<keyword id="KW-1185">Reference proteome</keyword>
<sequence length="78" mass="8840">MSDFWHKLGCCVVEKPQPKKRRRRIDRSMIGEPMNFVHLTHIGSGDMAAGEGLPMTGAVQEMRSKGGRERQWSSSRVL</sequence>
<name>C42S1_CHICK</name>
<organism>
    <name type="scientific">Gallus gallus</name>
    <name type="common">Chicken</name>
    <dbReference type="NCBI Taxonomy" id="9031"/>
    <lineage>
        <taxon>Eukaryota</taxon>
        <taxon>Metazoa</taxon>
        <taxon>Chordata</taxon>
        <taxon>Craniata</taxon>
        <taxon>Vertebrata</taxon>
        <taxon>Euteleostomi</taxon>
        <taxon>Archelosauria</taxon>
        <taxon>Archosauria</taxon>
        <taxon>Dinosauria</taxon>
        <taxon>Saurischia</taxon>
        <taxon>Theropoda</taxon>
        <taxon>Coelurosauria</taxon>
        <taxon>Aves</taxon>
        <taxon>Neognathae</taxon>
        <taxon>Galloanserae</taxon>
        <taxon>Galliformes</taxon>
        <taxon>Phasianidae</taxon>
        <taxon>Phasianinae</taxon>
        <taxon>Gallus</taxon>
    </lineage>
</organism>
<dbReference type="EMBL" id="AJ720173">
    <property type="protein sequence ID" value="CAG31832.1"/>
    <property type="molecule type" value="mRNA"/>
</dbReference>
<dbReference type="RefSeq" id="NP_001383570.1">
    <property type="nucleotide sequence ID" value="NM_001396641.1"/>
</dbReference>
<dbReference type="RefSeq" id="XP_003642732.1">
    <property type="nucleotide sequence ID" value="XM_003642684.2"/>
</dbReference>
<dbReference type="RefSeq" id="XP_046788454.1">
    <property type="nucleotide sequence ID" value="XM_046932498.1"/>
</dbReference>
<dbReference type="FunCoup" id="Q5ZKB1">
    <property type="interactions" value="414"/>
</dbReference>
<dbReference type="STRING" id="9031.ENSGALP00000041631"/>
<dbReference type="PaxDb" id="9031-ENSGALP00000041631"/>
<dbReference type="GeneID" id="100857323"/>
<dbReference type="KEGG" id="gga:100857323"/>
<dbReference type="VEuPathDB" id="HostDB:geneid_100857323"/>
<dbReference type="eggNOG" id="ENOG502S499">
    <property type="taxonomic scope" value="Eukaryota"/>
</dbReference>
<dbReference type="HOGENOM" id="CLU_173417_1_0_1"/>
<dbReference type="InParanoid" id="Q5ZKB1"/>
<dbReference type="OrthoDB" id="5559822at2759"/>
<dbReference type="PhylomeDB" id="Q5ZKB1"/>
<dbReference type="PRO" id="PR:Q5ZKB1"/>
<dbReference type="Proteomes" id="UP000000539">
    <property type="component" value="Chromosome 25"/>
</dbReference>
<dbReference type="Bgee" id="ENSGALG00000028119">
    <property type="expression patterns" value="Expressed in granulocyte and 12 other cell types or tissues"/>
</dbReference>
<dbReference type="GO" id="GO:0005737">
    <property type="term" value="C:cytoplasm"/>
    <property type="evidence" value="ECO:0007669"/>
    <property type="project" value="UniProtKB-KW"/>
</dbReference>
<dbReference type="GO" id="GO:0005856">
    <property type="term" value="C:cytoskeleton"/>
    <property type="evidence" value="ECO:0007669"/>
    <property type="project" value="UniProtKB-SubCell"/>
</dbReference>
<dbReference type="GO" id="GO:0005886">
    <property type="term" value="C:plasma membrane"/>
    <property type="evidence" value="ECO:0000318"/>
    <property type="project" value="GO_Central"/>
</dbReference>
<dbReference type="GO" id="GO:0031267">
    <property type="term" value="F:small GTPase binding"/>
    <property type="evidence" value="ECO:0007669"/>
    <property type="project" value="InterPro"/>
</dbReference>
<dbReference type="GO" id="GO:0008360">
    <property type="term" value="P:regulation of cell shape"/>
    <property type="evidence" value="ECO:0007669"/>
    <property type="project" value="UniProtKB-KW"/>
</dbReference>
<dbReference type="GO" id="GO:0035023">
    <property type="term" value="P:regulation of Rho protein signal transduction"/>
    <property type="evidence" value="ECO:0007669"/>
    <property type="project" value="InterPro"/>
</dbReference>
<dbReference type="FunFam" id="3.90.810.10:FF:000015">
    <property type="entry name" value="CDC42 small effector protein 1"/>
    <property type="match status" value="1"/>
</dbReference>
<dbReference type="Gene3D" id="3.90.810.10">
    <property type="entry name" value="CRIB domain"/>
    <property type="match status" value="1"/>
</dbReference>
<dbReference type="InterPro" id="IPR000095">
    <property type="entry name" value="CRIB_dom"/>
</dbReference>
<dbReference type="InterPro" id="IPR036936">
    <property type="entry name" value="CRIB_dom_sf"/>
</dbReference>
<dbReference type="InterPro" id="IPR039056">
    <property type="entry name" value="SPEC"/>
</dbReference>
<dbReference type="PANTHER" id="PTHR13502:SF3">
    <property type="entry name" value="CDC42 SMALL EFFECTOR PROTEIN 1"/>
    <property type="match status" value="1"/>
</dbReference>
<dbReference type="PANTHER" id="PTHR13502">
    <property type="entry name" value="CDC42 SMALL EFFECTOR PROTEIN HOMOLOG"/>
    <property type="match status" value="1"/>
</dbReference>
<dbReference type="Pfam" id="PF00786">
    <property type="entry name" value="PBD"/>
    <property type="match status" value="1"/>
</dbReference>
<dbReference type="PROSITE" id="PS50108">
    <property type="entry name" value="CRIB"/>
    <property type="match status" value="1"/>
</dbReference>
<comment type="function">
    <text evidence="1">Probably involved in the organization of the actin cytoskeleton by acting downstream of CDC42, inducing actin filament assembly.</text>
</comment>
<comment type="subcellular location">
    <subcellularLocation>
        <location evidence="1">Cytoplasm</location>
        <location evidence="1">Cytoskeleton</location>
    </subcellularLocation>
    <subcellularLocation>
        <location evidence="1">Cell membrane</location>
        <topology evidence="1">Lipid-anchor</topology>
    </subcellularLocation>
</comment>
<comment type="similarity">
    <text evidence="3">Belongs to the CDC42SE/SPEC family.</text>
</comment>
<gene>
    <name type="primary">CDC42SE1</name>
    <name type="ORF">RCJMB04_11p12</name>
</gene>
<reference key="1">
    <citation type="journal article" date="2005" name="Genome Biol.">
        <title>Full-length cDNAs from chicken bursal lymphocytes to facilitate gene function analysis.</title>
        <authorList>
            <person name="Caldwell R.B."/>
            <person name="Kierzek A.M."/>
            <person name="Arakawa H."/>
            <person name="Bezzubov Y."/>
            <person name="Zaim J."/>
            <person name="Fiedler P."/>
            <person name="Kutter S."/>
            <person name="Blagodatski A."/>
            <person name="Kostovska D."/>
            <person name="Koter M."/>
            <person name="Plachy J."/>
            <person name="Carninci P."/>
            <person name="Hayashizaki Y."/>
            <person name="Buerstedde J.-M."/>
        </authorList>
    </citation>
    <scope>NUCLEOTIDE SEQUENCE [LARGE SCALE MRNA]</scope>
    <source>
        <strain>CB</strain>
        <tissue>Bursa of Fabricius</tissue>
    </source>
</reference>
<accession>Q5ZKB1</accession>
<proteinExistence type="inferred from homology"/>
<protein>
    <recommendedName>
        <fullName>CDC42 small effector protein 1</fullName>
    </recommendedName>
</protein>
<feature type="chain" id="PRO_0000334633" description="CDC42 small effector protein 1">
    <location>
        <begin position="1"/>
        <end position="78"/>
    </location>
</feature>
<feature type="domain" description="CRIB" evidence="2">
    <location>
        <begin position="30"/>
        <end position="43"/>
    </location>
</feature>
<feature type="lipid moiety-binding region" description="S-palmitoyl cysteine" evidence="1">
    <location>
        <position position="10"/>
    </location>
</feature>
<feature type="lipid moiety-binding region" description="S-palmitoyl cysteine" evidence="1">
    <location>
        <position position="11"/>
    </location>
</feature>
<evidence type="ECO:0000250" key="1"/>
<evidence type="ECO:0000255" key="2">
    <source>
        <dbReference type="PROSITE-ProRule" id="PRU00057"/>
    </source>
</evidence>
<evidence type="ECO:0000305" key="3"/>